<organism>
    <name type="scientific">Escherichia coli (strain SMS-3-5 / SECEC)</name>
    <dbReference type="NCBI Taxonomy" id="439855"/>
    <lineage>
        <taxon>Bacteria</taxon>
        <taxon>Pseudomonadati</taxon>
        <taxon>Pseudomonadota</taxon>
        <taxon>Gammaproteobacteria</taxon>
        <taxon>Enterobacterales</taxon>
        <taxon>Enterobacteriaceae</taxon>
        <taxon>Escherichia</taxon>
    </lineage>
</organism>
<comment type="function">
    <text evidence="1">May be involved in recombination.</text>
</comment>
<comment type="subcellular location">
    <subcellularLocation>
        <location evidence="1">Cytoplasm</location>
        <location evidence="1">Nucleoid</location>
    </subcellularLocation>
</comment>
<comment type="similarity">
    <text evidence="1">Belongs to the RdgC family.</text>
</comment>
<keyword id="KW-0963">Cytoplasm</keyword>
<keyword id="KW-0233">DNA recombination</keyword>
<gene>
    <name evidence="1" type="primary">rdgC</name>
    <name type="ordered locus">EcSMS35_0423</name>
</gene>
<evidence type="ECO:0000255" key="1">
    <source>
        <dbReference type="HAMAP-Rule" id="MF_00194"/>
    </source>
</evidence>
<reference key="1">
    <citation type="journal article" date="2008" name="J. Bacteriol.">
        <title>Insights into the environmental resistance gene pool from the genome sequence of the multidrug-resistant environmental isolate Escherichia coli SMS-3-5.</title>
        <authorList>
            <person name="Fricke W.F."/>
            <person name="Wright M.S."/>
            <person name="Lindell A.H."/>
            <person name="Harkins D.M."/>
            <person name="Baker-Austin C."/>
            <person name="Ravel J."/>
            <person name="Stepanauskas R."/>
        </authorList>
    </citation>
    <scope>NUCLEOTIDE SEQUENCE [LARGE SCALE GENOMIC DNA]</scope>
    <source>
        <strain>SMS-3-5 / SECEC</strain>
    </source>
</reference>
<protein>
    <recommendedName>
        <fullName evidence="1">Recombination-associated protein RdgC</fullName>
    </recommendedName>
</protein>
<proteinExistence type="inferred from homology"/>
<sequence length="303" mass="34023">MLWFKNLMVYRLSREISLRAEEMEKQLASMAFTPCGSQDMAKMGWVPPMGSHSDALTHVANGQIVICARKEEKILPSPVIKQALEAKIAKLEAEQARKLKKTEKDSLKDEVLHSLLPRAFSRFSQTMMWIDTVNGLIMVDCASAKKAEDTLALLRKSLGSLPVVPLSMENPIELTLTEWVRSGSTAQGFQLLDEAELKSLLEDGGVIRAKKQDLTSEEITNHIEAGKVVTKLALDWQQRIQFVMCDDGSLKRLKFCDELRDQNEDIDREDFAQRFDADFILMTGELAALIQNLIEGLGGEAQR</sequence>
<name>RDGC_ECOSM</name>
<feature type="chain" id="PRO_1000118630" description="Recombination-associated protein RdgC">
    <location>
        <begin position="1"/>
        <end position="303"/>
    </location>
</feature>
<dbReference type="EMBL" id="CP000970">
    <property type="protein sequence ID" value="ACB17292.1"/>
    <property type="molecule type" value="Genomic_DNA"/>
</dbReference>
<dbReference type="RefSeq" id="WP_001366457.1">
    <property type="nucleotide sequence ID" value="NC_010498.1"/>
</dbReference>
<dbReference type="SMR" id="B1LIS7"/>
<dbReference type="KEGG" id="ecm:EcSMS35_0423"/>
<dbReference type="HOGENOM" id="CLU_052038_1_1_6"/>
<dbReference type="Proteomes" id="UP000007011">
    <property type="component" value="Chromosome"/>
</dbReference>
<dbReference type="GO" id="GO:0043590">
    <property type="term" value="C:bacterial nucleoid"/>
    <property type="evidence" value="ECO:0007669"/>
    <property type="project" value="TreeGrafter"/>
</dbReference>
<dbReference type="GO" id="GO:0005737">
    <property type="term" value="C:cytoplasm"/>
    <property type="evidence" value="ECO:0007669"/>
    <property type="project" value="UniProtKB-UniRule"/>
</dbReference>
<dbReference type="GO" id="GO:0003690">
    <property type="term" value="F:double-stranded DNA binding"/>
    <property type="evidence" value="ECO:0007669"/>
    <property type="project" value="TreeGrafter"/>
</dbReference>
<dbReference type="GO" id="GO:0006310">
    <property type="term" value="P:DNA recombination"/>
    <property type="evidence" value="ECO:0007669"/>
    <property type="project" value="UniProtKB-UniRule"/>
</dbReference>
<dbReference type="GO" id="GO:0000018">
    <property type="term" value="P:regulation of DNA recombination"/>
    <property type="evidence" value="ECO:0007669"/>
    <property type="project" value="TreeGrafter"/>
</dbReference>
<dbReference type="HAMAP" id="MF_00194">
    <property type="entry name" value="RdgC"/>
    <property type="match status" value="1"/>
</dbReference>
<dbReference type="InterPro" id="IPR007476">
    <property type="entry name" value="RdgC"/>
</dbReference>
<dbReference type="NCBIfam" id="NF001460">
    <property type="entry name" value="PRK00321.1-1"/>
    <property type="match status" value="1"/>
</dbReference>
<dbReference type="NCBIfam" id="NF001462">
    <property type="entry name" value="PRK00321.1-3"/>
    <property type="match status" value="1"/>
</dbReference>
<dbReference type="NCBIfam" id="NF001464">
    <property type="entry name" value="PRK00321.1-5"/>
    <property type="match status" value="1"/>
</dbReference>
<dbReference type="PANTHER" id="PTHR38103">
    <property type="entry name" value="RECOMBINATION-ASSOCIATED PROTEIN RDGC"/>
    <property type="match status" value="1"/>
</dbReference>
<dbReference type="PANTHER" id="PTHR38103:SF1">
    <property type="entry name" value="RECOMBINATION-ASSOCIATED PROTEIN RDGC"/>
    <property type="match status" value="1"/>
</dbReference>
<dbReference type="Pfam" id="PF04381">
    <property type="entry name" value="RdgC"/>
    <property type="match status" value="1"/>
</dbReference>
<accession>B1LIS7</accession>